<sequence>MKLSLIIIATSLVIAVVAFPSKDSAATDFDKTESLENVEERVETALDERPRACSKNPGESCTNNCECCGATVVCASVYVAGVEKKSCKSKTSDNGFLNIIGQAANAVQNAASLCV</sequence>
<feature type="signal peptide" evidence="2">
    <location>
        <begin position="1"/>
        <end position="18"/>
    </location>
</feature>
<feature type="propeptide" id="PRO_0000401915" evidence="1">
    <location>
        <begin position="19"/>
        <end position="51"/>
    </location>
</feature>
<feature type="chain" id="PRO_0000401916" description="U7-theraphotoxin-Hs1a">
    <location>
        <begin position="52"/>
        <end position="115"/>
    </location>
</feature>
<feature type="splice variant" id="VSP_040197" description="In isoform 2." evidence="4">
    <original>YVAGVEKKSCKSKTSDNGFLNIIGQAANAVQNAASLCV</original>
    <variation>T</variation>
    <location>
        <begin position="78"/>
        <end position="115"/>
    </location>
</feature>
<evidence type="ECO:0000250" key="1"/>
<evidence type="ECO:0000255" key="2"/>
<evidence type="ECO:0000269" key="3">
    <source>
    </source>
</evidence>
<evidence type="ECO:0000303" key="4">
    <source>
    </source>
</evidence>
<evidence type="ECO:0000305" key="5"/>
<reference key="1">
    <citation type="journal article" date="2008" name="Toxicon">
        <title>Molecular diversification based on analysis of expressed sequence tags from the venom glands of the Chinese bird spider Ornithoctonus huwena.</title>
        <authorList>
            <person name="Jiang L."/>
            <person name="Peng L."/>
            <person name="Chen J."/>
            <person name="Zhang Y."/>
            <person name="Xiong X."/>
            <person name="Liang S."/>
        </authorList>
    </citation>
    <scope>NUCLEOTIDE SEQUENCE [LARGE SCALE MRNA] (ISOFORMS 1 AND 2)</scope>
    <scope>SUBCELLULAR LOCATION</scope>
    <scope>TISSUE SPECIFICITY</scope>
    <source>
        <tissue>Venom</tissue>
        <tissue>Venom gland</tissue>
    </source>
</reference>
<proteinExistence type="evidence at protein level"/>
<protein>
    <recommendedName>
        <fullName>U7-theraphotoxin-Hs1a</fullName>
        <shortName>U7-TRTX-Hs1a</shortName>
    </recommendedName>
    <alternativeName>
        <fullName>HWTX-XVIIIa1</fullName>
    </alternativeName>
    <alternativeName>
        <fullName>HWTX-XVIIIa2</fullName>
    </alternativeName>
</protein>
<name>TX18A_CYRSC</name>
<keyword id="KW-0025">Alternative splicing</keyword>
<keyword id="KW-1015">Disulfide bond</keyword>
<keyword id="KW-0964">Secreted</keyword>
<keyword id="KW-0732">Signal</keyword>
<keyword id="KW-0800">Toxin</keyword>
<organism>
    <name type="scientific">Cyriopagopus schmidti</name>
    <name type="common">Chinese bird spider</name>
    <name type="synonym">Haplopelma schmidti</name>
    <dbReference type="NCBI Taxonomy" id="29017"/>
    <lineage>
        <taxon>Eukaryota</taxon>
        <taxon>Metazoa</taxon>
        <taxon>Ecdysozoa</taxon>
        <taxon>Arthropoda</taxon>
        <taxon>Chelicerata</taxon>
        <taxon>Arachnida</taxon>
        <taxon>Araneae</taxon>
        <taxon>Mygalomorphae</taxon>
        <taxon>Theraphosidae</taxon>
        <taxon>Cyriopagopus</taxon>
    </lineage>
</organism>
<accession>B3FIN4</accession>
<accession>B3FIN5</accession>
<comment type="subcellular location">
    <subcellularLocation>
        <location evidence="3">Secreted</location>
    </subcellularLocation>
</comment>
<comment type="alternative products">
    <event type="alternative splicing"/>
    <isoform>
        <id>B3FIN4-1</id>
        <name>1</name>
        <name>HWTX-XVIIIa1</name>
        <sequence type="displayed"/>
    </isoform>
    <isoform>
        <id>B3FIN4-2</id>
        <name>2</name>
        <name>HWTX-XVIIIa2</name>
        <name>Truncated</name>
        <sequence type="described" ref="VSP_040197"/>
    </isoform>
</comment>
<comment type="tissue specificity">
    <text evidence="3">Expressed by the venom gland.</text>
</comment>
<comment type="PTM">
    <text evidence="1">Contains 4 disulfide bonds.</text>
</comment>
<comment type="miscellaneous">
    <molecule>Isoform 2</molecule>
    <text evidence="5">It is unsure whether this isoform is produced by alternative splicing or another event.</text>
</comment>
<comment type="similarity">
    <text evidence="5">Belongs to the neurotoxin 25 family. F7 subfamily.</text>
</comment>
<dbReference type="EMBL" id="EU195228">
    <property type="protein sequence ID" value="ABY77681.1"/>
    <property type="molecule type" value="mRNA"/>
</dbReference>
<dbReference type="EMBL" id="EU195229">
    <property type="protein sequence ID" value="ABY77682.1"/>
    <property type="molecule type" value="mRNA"/>
</dbReference>
<dbReference type="ArachnoServer" id="AS000584">
    <property type="toxin name" value="U7-theraphotoxin-Hs1a"/>
</dbReference>
<dbReference type="ArachnoServer" id="AS000540">
    <property type="toxin name" value="U7-theraphotoxin-Hs1b"/>
</dbReference>
<dbReference type="GO" id="GO:0005576">
    <property type="term" value="C:extracellular region"/>
    <property type="evidence" value="ECO:0007669"/>
    <property type="project" value="UniProtKB-SubCell"/>
</dbReference>
<dbReference type="GO" id="GO:0090729">
    <property type="term" value="F:toxin activity"/>
    <property type="evidence" value="ECO:0007669"/>
    <property type="project" value="UniProtKB-KW"/>
</dbReference>